<feature type="chain" id="PRO_1000062770" description="Probable ECA polymerase">
    <location>
        <begin position="1"/>
        <end position="454"/>
    </location>
</feature>
<feature type="transmembrane region" description="Helical" evidence="1">
    <location>
        <begin position="3"/>
        <end position="23"/>
    </location>
</feature>
<feature type="transmembrane region" description="Helical" evidence="1">
    <location>
        <begin position="39"/>
        <end position="59"/>
    </location>
</feature>
<feature type="transmembrane region" description="Helical" evidence="1">
    <location>
        <begin position="61"/>
        <end position="81"/>
    </location>
</feature>
<feature type="transmembrane region" description="Helical" evidence="1">
    <location>
        <begin position="119"/>
        <end position="139"/>
    </location>
</feature>
<feature type="transmembrane region" description="Helical" evidence="1">
    <location>
        <begin position="154"/>
        <end position="174"/>
    </location>
</feature>
<feature type="transmembrane region" description="Helical" evidence="1">
    <location>
        <begin position="180"/>
        <end position="200"/>
    </location>
</feature>
<feature type="transmembrane region" description="Helical" evidence="1">
    <location>
        <begin position="201"/>
        <end position="221"/>
    </location>
</feature>
<feature type="transmembrane region" description="Helical" evidence="1">
    <location>
        <begin position="222"/>
        <end position="242"/>
    </location>
</feature>
<feature type="transmembrane region" description="Helical" evidence="1">
    <location>
        <begin position="340"/>
        <end position="360"/>
    </location>
</feature>
<feature type="transmembrane region" description="Helical" evidence="1">
    <location>
        <begin position="377"/>
        <end position="397"/>
    </location>
</feature>
<feature type="transmembrane region" description="Helical" evidence="1">
    <location>
        <begin position="409"/>
        <end position="429"/>
    </location>
</feature>
<comment type="function">
    <text evidence="1">Probably involved in the polymerization of enterobacterial common antigen (ECA) trisaccharide repeat units.</text>
</comment>
<comment type="pathway">
    <text evidence="1">Bacterial outer membrane biogenesis; enterobacterial common antigen biosynthesis.</text>
</comment>
<comment type="subunit">
    <text evidence="1">Probably part of a complex composed of WzxE, WzyE and WzzE.</text>
</comment>
<comment type="subcellular location">
    <subcellularLocation>
        <location evidence="1">Cell inner membrane</location>
        <topology evidence="1">Multi-pass membrane protein</topology>
    </subcellularLocation>
</comment>
<comment type="similarity">
    <text evidence="1">Belongs to the WzyE family.</text>
</comment>
<sequence>MTLGQFGGLFCIYLIAVIFILTLTYQEFRRVKFNFNVLFSMLYLLTFYFGFPLTCMLVFQFGVAVVPVEYLLYAMLSATAFYGIYYVTYKTRLRQPRSQPRTPIFTMNRVETNLTWVLLALVAVGTVGIFFMQNGFLLFKLDSYSKIFSSDVSGVALKRFFYFFIPAMLVVYFLKQDRRAWFFFLASTVAFGILTYVIVGGTRANIIIAFSLFLFIGIVRGWITLWMLAAAGVFGIVGMFWLALKRYGLDVNGAEAFYTFLYLTRDTFSPWENLGLLLQNYDKIDFQGLAPIVRDFYVFIPSALWPERPDLVLNTANYFTWDVLDNHSGLAISPTLIGSLVVMGGVLFIPLGAIVVGLIIKWFDWLYEQGKAESNRYKAAILQSFCFGAVFNIIVLAREGLDSFVSRVVFFCVIFGACLVLAKLLYWLFDTAGLIKRQGIKSNRLSTPNAGNQL</sequence>
<keyword id="KW-0997">Cell inner membrane</keyword>
<keyword id="KW-1003">Cell membrane</keyword>
<keyword id="KW-0472">Membrane</keyword>
<keyword id="KW-0812">Transmembrane</keyword>
<keyword id="KW-1133">Transmembrane helix</keyword>
<proteinExistence type="inferred from homology"/>
<name>WZYE_YERPP</name>
<reference key="1">
    <citation type="submission" date="2007-02" db="EMBL/GenBank/DDBJ databases">
        <title>Complete sequence of chromosome of Yersinia pestis Pestoides F.</title>
        <authorList>
            <consortium name="US DOE Joint Genome Institute"/>
            <person name="Copeland A."/>
            <person name="Lucas S."/>
            <person name="Lapidus A."/>
            <person name="Barry K."/>
            <person name="Detter J.C."/>
            <person name="Glavina del Rio T."/>
            <person name="Hammon N."/>
            <person name="Israni S."/>
            <person name="Dalin E."/>
            <person name="Tice H."/>
            <person name="Pitluck S."/>
            <person name="Di Bartolo G."/>
            <person name="Chain P."/>
            <person name="Malfatti S."/>
            <person name="Shin M."/>
            <person name="Vergez L."/>
            <person name="Schmutz J."/>
            <person name="Larimer F."/>
            <person name="Land M."/>
            <person name="Hauser L."/>
            <person name="Worsham P."/>
            <person name="Chu M."/>
            <person name="Bearden S."/>
            <person name="Garcia E."/>
            <person name="Richardson P."/>
        </authorList>
    </citation>
    <scope>NUCLEOTIDE SEQUENCE [LARGE SCALE GENOMIC DNA]</scope>
    <source>
        <strain>Pestoides F</strain>
    </source>
</reference>
<protein>
    <recommendedName>
        <fullName evidence="1">Probable ECA polymerase</fullName>
    </recommendedName>
</protein>
<dbReference type="EMBL" id="CP000668">
    <property type="protein sequence ID" value="ABP41827.1"/>
    <property type="molecule type" value="Genomic_DNA"/>
</dbReference>
<dbReference type="RefSeq" id="WP_002211978.1">
    <property type="nucleotide sequence ID" value="NZ_CP009715.1"/>
</dbReference>
<dbReference type="GeneID" id="57974847"/>
<dbReference type="KEGG" id="ypp:YPDSF_3474"/>
<dbReference type="PATRIC" id="fig|386656.14.peg.850"/>
<dbReference type="UniPathway" id="UPA00566"/>
<dbReference type="GO" id="GO:0005886">
    <property type="term" value="C:plasma membrane"/>
    <property type="evidence" value="ECO:0007669"/>
    <property type="project" value="UniProtKB-SubCell"/>
</dbReference>
<dbReference type="GO" id="GO:0009246">
    <property type="term" value="P:enterobacterial common antigen biosynthetic process"/>
    <property type="evidence" value="ECO:0007669"/>
    <property type="project" value="UniProtKB-UniRule"/>
</dbReference>
<dbReference type="HAMAP" id="MF_01003">
    <property type="entry name" value="WzyE"/>
    <property type="match status" value="1"/>
</dbReference>
<dbReference type="InterPro" id="IPR010691">
    <property type="entry name" value="WzyE"/>
</dbReference>
<dbReference type="NCBIfam" id="NF002820">
    <property type="entry name" value="PRK02975.1"/>
    <property type="match status" value="1"/>
</dbReference>
<dbReference type="Pfam" id="PF06899">
    <property type="entry name" value="WzyE"/>
    <property type="match status" value="1"/>
</dbReference>
<evidence type="ECO:0000255" key="1">
    <source>
        <dbReference type="HAMAP-Rule" id="MF_01003"/>
    </source>
</evidence>
<accession>A4TRB5</accession>
<organism>
    <name type="scientific">Yersinia pestis (strain Pestoides F)</name>
    <dbReference type="NCBI Taxonomy" id="386656"/>
    <lineage>
        <taxon>Bacteria</taxon>
        <taxon>Pseudomonadati</taxon>
        <taxon>Pseudomonadota</taxon>
        <taxon>Gammaproteobacteria</taxon>
        <taxon>Enterobacterales</taxon>
        <taxon>Yersiniaceae</taxon>
        <taxon>Yersinia</taxon>
    </lineage>
</organism>
<gene>
    <name evidence="1" type="primary">wzyE</name>
    <name type="ordered locus">YPDSF_3474</name>
</gene>